<proteinExistence type="inferred from homology"/>
<sequence>MTLHEPLGLIDAARELRGFQAEPAQMRAGAPGKVGRLRLGFSLRDGRSVLHDLYRAAPLLVQQALYWDEAMPELPVCPIISVGGGILQGDRYTIDIAVGEGACAHVSTQGANRIHCMDANYASQHQTVTVAAGGYLEYLPDFTIPYRGSRFLSRTDLVVAADATLLYGEMVLAGRKHHHVEERFGFDLLSMDVNLRRPGGHKLVAEKILIEKGDPTIAFAAVMRGFDAFANILCVTPPETAARIKERFEPHFPIEAPRALSGVSRLPNAAGLMLRAVGVETYDVRHEVRRFWRIVREEARDRSLPAEPYWR</sequence>
<evidence type="ECO:0000255" key="1">
    <source>
        <dbReference type="HAMAP-Rule" id="MF_01384"/>
    </source>
</evidence>
<dbReference type="EMBL" id="CP000908">
    <property type="protein sequence ID" value="ABY29702.1"/>
    <property type="molecule type" value="Genomic_DNA"/>
</dbReference>
<dbReference type="RefSeq" id="WP_012252935.1">
    <property type="nucleotide sequence ID" value="NC_010172.1"/>
</dbReference>
<dbReference type="SMR" id="A9W296"/>
<dbReference type="KEGG" id="mex:Mext_1301"/>
<dbReference type="eggNOG" id="COG0829">
    <property type="taxonomic scope" value="Bacteria"/>
</dbReference>
<dbReference type="HOGENOM" id="CLU_056339_1_0_5"/>
<dbReference type="BioCyc" id="MEXT419610:MEXT_RS06555-MONOMER"/>
<dbReference type="GO" id="GO:0005737">
    <property type="term" value="C:cytoplasm"/>
    <property type="evidence" value="ECO:0007669"/>
    <property type="project" value="UniProtKB-SubCell"/>
</dbReference>
<dbReference type="GO" id="GO:0016151">
    <property type="term" value="F:nickel cation binding"/>
    <property type="evidence" value="ECO:0007669"/>
    <property type="project" value="UniProtKB-UniRule"/>
</dbReference>
<dbReference type="HAMAP" id="MF_01384">
    <property type="entry name" value="UreD"/>
    <property type="match status" value="1"/>
</dbReference>
<dbReference type="InterPro" id="IPR002669">
    <property type="entry name" value="UreD"/>
</dbReference>
<dbReference type="PANTHER" id="PTHR33643">
    <property type="entry name" value="UREASE ACCESSORY PROTEIN D"/>
    <property type="match status" value="1"/>
</dbReference>
<dbReference type="PANTHER" id="PTHR33643:SF1">
    <property type="entry name" value="UREASE ACCESSORY PROTEIN D"/>
    <property type="match status" value="1"/>
</dbReference>
<dbReference type="Pfam" id="PF01774">
    <property type="entry name" value="UreD"/>
    <property type="match status" value="1"/>
</dbReference>
<gene>
    <name evidence="1" type="primary">ureD2</name>
    <name type="ordered locus">Mext_1301</name>
</gene>
<organism>
    <name type="scientific">Methylorubrum extorquens (strain PA1)</name>
    <name type="common">Methylobacterium extorquens</name>
    <dbReference type="NCBI Taxonomy" id="419610"/>
    <lineage>
        <taxon>Bacteria</taxon>
        <taxon>Pseudomonadati</taxon>
        <taxon>Pseudomonadota</taxon>
        <taxon>Alphaproteobacteria</taxon>
        <taxon>Hyphomicrobiales</taxon>
        <taxon>Methylobacteriaceae</taxon>
        <taxon>Methylorubrum</taxon>
    </lineage>
</organism>
<protein>
    <recommendedName>
        <fullName evidence="1">Urease accessory protein UreD 2</fullName>
    </recommendedName>
</protein>
<reference key="1">
    <citation type="submission" date="2007-12" db="EMBL/GenBank/DDBJ databases">
        <title>Complete sequence of Methylobacterium extorquens PA1.</title>
        <authorList>
            <consortium name="US DOE Joint Genome Institute"/>
            <person name="Copeland A."/>
            <person name="Lucas S."/>
            <person name="Lapidus A."/>
            <person name="Barry K."/>
            <person name="Glavina del Rio T."/>
            <person name="Dalin E."/>
            <person name="Tice H."/>
            <person name="Pitluck S."/>
            <person name="Saunders E."/>
            <person name="Brettin T."/>
            <person name="Bruce D."/>
            <person name="Detter J.C."/>
            <person name="Han C."/>
            <person name="Schmutz J."/>
            <person name="Larimer F."/>
            <person name="Land M."/>
            <person name="Hauser L."/>
            <person name="Kyrpides N."/>
            <person name="Kim E."/>
            <person name="Marx C."/>
            <person name="Richardson P."/>
        </authorList>
    </citation>
    <scope>NUCLEOTIDE SEQUENCE [LARGE SCALE GENOMIC DNA]</scope>
    <source>
        <strain>PA1</strain>
    </source>
</reference>
<accession>A9W296</accession>
<feature type="chain" id="PRO_0000346573" description="Urease accessory protein UreD 2">
    <location>
        <begin position="1"/>
        <end position="311"/>
    </location>
</feature>
<keyword id="KW-0143">Chaperone</keyword>
<keyword id="KW-0963">Cytoplasm</keyword>
<keyword id="KW-0996">Nickel insertion</keyword>
<comment type="function">
    <text evidence="1">Required for maturation of urease via the functional incorporation of the urease nickel metallocenter.</text>
</comment>
<comment type="subunit">
    <text evidence="1">UreD, UreF and UreG form a complex that acts as a GTP-hydrolysis-dependent molecular chaperone, activating the urease apoprotein by helping to assemble the nickel containing metallocenter of UreC. The UreE protein probably delivers the nickel.</text>
</comment>
<comment type="subcellular location">
    <subcellularLocation>
        <location evidence="1">Cytoplasm</location>
    </subcellularLocation>
</comment>
<comment type="similarity">
    <text evidence="1">Belongs to the UreD family.</text>
</comment>
<name>URED2_METEP</name>